<dbReference type="EMBL" id="AJ243310">
    <property type="protein sequence ID" value="CAB45684.1"/>
    <property type="molecule type" value="mRNA"/>
</dbReference>
<dbReference type="EMBL" id="AF164791">
    <property type="protein sequence ID" value="AAF80755.1"/>
    <property type="molecule type" value="mRNA"/>
</dbReference>
<dbReference type="EMBL" id="AK300766">
    <property type="protein sequence ID" value="BAG62431.1"/>
    <property type="molecule type" value="mRNA"/>
</dbReference>
<dbReference type="EMBL" id="AK313824">
    <property type="protein sequence ID" value="BAG36559.1"/>
    <property type="molecule type" value="mRNA"/>
</dbReference>
<dbReference type="EMBL" id="AF111168">
    <property type="protein sequence ID" value="AAD09623.1"/>
    <property type="molecule type" value="Genomic_DNA"/>
</dbReference>
<dbReference type="EMBL" id="CH471061">
    <property type="protein sequence ID" value="EAW81291.1"/>
    <property type="molecule type" value="Genomic_DNA"/>
</dbReference>
<dbReference type="EMBL" id="BC000321">
    <property type="protein sequence ID" value="AAH00321.1"/>
    <property type="molecule type" value="mRNA"/>
</dbReference>
<dbReference type="EMBL" id="BC007398">
    <property type="protein sequence ID" value="AAH07398.2"/>
    <property type="molecule type" value="mRNA"/>
</dbReference>
<dbReference type="EMBL" id="AF161440">
    <property type="protein sequence ID" value="AAF29000.1"/>
    <property type="molecule type" value="mRNA"/>
</dbReference>
<dbReference type="CCDS" id="CCDS9863.1">
    <molecule id="O95433-1"/>
</dbReference>
<dbReference type="PIR" id="JC7769">
    <property type="entry name" value="JC7769"/>
</dbReference>
<dbReference type="RefSeq" id="NP_001308370.1">
    <property type="nucleotide sequence ID" value="NM_001321441.1"/>
</dbReference>
<dbReference type="RefSeq" id="NP_036243.1">
    <molecule id="O95433-1"/>
    <property type="nucleotide sequence ID" value="NM_012111.3"/>
</dbReference>
<dbReference type="PDB" id="1X53">
    <property type="method" value="NMR"/>
    <property type="chains" value="A=204-335"/>
</dbReference>
<dbReference type="PDB" id="7DMD">
    <property type="method" value="NMR"/>
    <property type="chains" value="A=28-162"/>
</dbReference>
<dbReference type="PDB" id="7DME">
    <property type="method" value="NMR"/>
    <property type="chains" value="A=28-335"/>
</dbReference>
<dbReference type="PDBsum" id="1X53"/>
<dbReference type="PDBsum" id="7DMD"/>
<dbReference type="PDBsum" id="7DME"/>
<dbReference type="BMRB" id="O95433"/>
<dbReference type="SMR" id="O95433"/>
<dbReference type="BioGRID" id="115846">
    <property type="interactions" value="297"/>
</dbReference>
<dbReference type="FunCoup" id="O95433">
    <property type="interactions" value="2416"/>
</dbReference>
<dbReference type="IntAct" id="O95433">
    <property type="interactions" value="86"/>
</dbReference>
<dbReference type="MINT" id="O95433"/>
<dbReference type="STRING" id="9606.ENSP00000216479"/>
<dbReference type="ChEMBL" id="CHEMBL3309113"/>
<dbReference type="TCDB" id="8.A.163.1.1">
    <property type="family name" value="the hsp90/cdc37 (hsp90/cdc37) family"/>
</dbReference>
<dbReference type="GlyGen" id="O95433">
    <property type="glycosylation" value="1 site, 1 O-linked glycan (1 site)"/>
</dbReference>
<dbReference type="iPTMnet" id="O95433"/>
<dbReference type="MetOSite" id="O95433"/>
<dbReference type="PhosphoSitePlus" id="O95433"/>
<dbReference type="SwissPalm" id="O95433"/>
<dbReference type="BioMuta" id="AHSA1"/>
<dbReference type="REPRODUCTION-2DPAGE" id="IPI00030706"/>
<dbReference type="jPOST" id="O95433"/>
<dbReference type="MassIVE" id="O95433"/>
<dbReference type="PaxDb" id="9606-ENSP00000216479"/>
<dbReference type="PeptideAtlas" id="O95433"/>
<dbReference type="ProteomicsDB" id="50878">
    <molecule id="O95433-1"/>
</dbReference>
<dbReference type="ProteomicsDB" id="5208"/>
<dbReference type="Pumba" id="O95433"/>
<dbReference type="Antibodypedia" id="54">
    <property type="antibodies" value="834 antibodies from 36 providers"/>
</dbReference>
<dbReference type="DNASU" id="10598"/>
<dbReference type="Ensembl" id="ENST00000216479.8">
    <molecule id="O95433-1"/>
    <property type="protein sequence ID" value="ENSP00000216479.3"/>
    <property type="gene ID" value="ENSG00000100591.8"/>
</dbReference>
<dbReference type="Ensembl" id="ENST00000535854.6">
    <molecule id="O95433-2"/>
    <property type="protein sequence ID" value="ENSP00000440108.2"/>
    <property type="gene ID" value="ENSG00000100591.8"/>
</dbReference>
<dbReference type="GeneID" id="10598"/>
<dbReference type="KEGG" id="hsa:10598"/>
<dbReference type="MANE-Select" id="ENST00000216479.8">
    <property type="protein sequence ID" value="ENSP00000216479.3"/>
    <property type="RefSeq nucleotide sequence ID" value="NM_012111.3"/>
    <property type="RefSeq protein sequence ID" value="NP_036243.1"/>
</dbReference>
<dbReference type="UCSC" id="uc001xtw.4">
    <molecule id="O95433-1"/>
    <property type="organism name" value="human"/>
</dbReference>
<dbReference type="AGR" id="HGNC:1189"/>
<dbReference type="CTD" id="10598"/>
<dbReference type="DisGeNET" id="10598"/>
<dbReference type="GeneCards" id="AHSA1"/>
<dbReference type="HGNC" id="HGNC:1189">
    <property type="gene designation" value="AHSA1"/>
</dbReference>
<dbReference type="HPA" id="ENSG00000100591">
    <property type="expression patterns" value="Low tissue specificity"/>
</dbReference>
<dbReference type="MalaCards" id="AHSA1"/>
<dbReference type="MIM" id="608466">
    <property type="type" value="gene"/>
</dbReference>
<dbReference type="neXtProt" id="NX_O95433"/>
<dbReference type="OpenTargets" id="ENSG00000100591"/>
<dbReference type="PharmGKB" id="PA25515"/>
<dbReference type="VEuPathDB" id="HostDB:ENSG00000100591"/>
<dbReference type="eggNOG" id="KOG2936">
    <property type="taxonomic scope" value="Eukaryota"/>
</dbReference>
<dbReference type="GeneTree" id="ENSGT00940000155144"/>
<dbReference type="HOGENOM" id="CLU_049046_0_0_1"/>
<dbReference type="InParanoid" id="O95433"/>
<dbReference type="OMA" id="HIAMKWR"/>
<dbReference type="OrthoDB" id="567237at2759"/>
<dbReference type="PAN-GO" id="O95433">
    <property type="GO annotations" value="4 GO annotations based on evolutionary models"/>
</dbReference>
<dbReference type="PhylomeDB" id="O95433"/>
<dbReference type="TreeFam" id="TF313680"/>
<dbReference type="PathwayCommons" id="O95433"/>
<dbReference type="SignaLink" id="O95433"/>
<dbReference type="SIGNOR" id="O95433"/>
<dbReference type="BioGRID-ORCS" id="10598">
    <property type="hits" value="32 hits in 1161 CRISPR screens"/>
</dbReference>
<dbReference type="CD-CODE" id="DEE660B4">
    <property type="entry name" value="Stress granule"/>
</dbReference>
<dbReference type="CD-CODE" id="FB4E32DD">
    <property type="entry name" value="Presynaptic clusters and postsynaptic densities"/>
</dbReference>
<dbReference type="ChiTaRS" id="AHSA1">
    <property type="organism name" value="human"/>
</dbReference>
<dbReference type="EvolutionaryTrace" id="O95433"/>
<dbReference type="GeneWiki" id="AHSA1"/>
<dbReference type="GenomeRNAi" id="10598"/>
<dbReference type="Pharos" id="O95433">
    <property type="development level" value="Tbio"/>
</dbReference>
<dbReference type="PRO" id="PR:O95433"/>
<dbReference type="Proteomes" id="UP000005640">
    <property type="component" value="Chromosome 14"/>
</dbReference>
<dbReference type="RNAct" id="O95433">
    <property type="molecule type" value="protein"/>
</dbReference>
<dbReference type="Bgee" id="ENSG00000100591">
    <property type="expression patterns" value="Expressed in oocyte and 210 other cell types or tissues"/>
</dbReference>
<dbReference type="ExpressionAtlas" id="O95433">
    <property type="expression patterns" value="baseline and differential"/>
</dbReference>
<dbReference type="GO" id="GO:0005829">
    <property type="term" value="C:cytosol"/>
    <property type="evidence" value="ECO:0000314"/>
    <property type="project" value="HPA"/>
</dbReference>
<dbReference type="GO" id="GO:0005783">
    <property type="term" value="C:endoplasmic reticulum"/>
    <property type="evidence" value="ECO:0007669"/>
    <property type="project" value="UniProtKB-SubCell"/>
</dbReference>
<dbReference type="GO" id="GO:0070062">
    <property type="term" value="C:extracellular exosome"/>
    <property type="evidence" value="ECO:0007005"/>
    <property type="project" value="UniProtKB"/>
</dbReference>
<dbReference type="GO" id="GO:0001671">
    <property type="term" value="F:ATPase activator activity"/>
    <property type="evidence" value="ECO:0000314"/>
    <property type="project" value="UniProtKB"/>
</dbReference>
<dbReference type="GO" id="GO:0045296">
    <property type="term" value="F:cadherin binding"/>
    <property type="evidence" value="ECO:0007005"/>
    <property type="project" value="BHF-UCL"/>
</dbReference>
<dbReference type="GO" id="GO:0051879">
    <property type="term" value="F:Hsp90 protein binding"/>
    <property type="evidence" value="ECO:0000353"/>
    <property type="project" value="UniProtKB"/>
</dbReference>
<dbReference type="GO" id="GO:0044183">
    <property type="term" value="F:protein folding chaperone"/>
    <property type="evidence" value="ECO:0000314"/>
    <property type="project" value="DisProt"/>
</dbReference>
<dbReference type="GO" id="GO:0051087">
    <property type="term" value="F:protein-folding chaperone binding"/>
    <property type="evidence" value="ECO:0000314"/>
    <property type="project" value="UniProtKB"/>
</dbReference>
<dbReference type="GO" id="GO:0051082">
    <property type="term" value="F:unfolded protein binding"/>
    <property type="evidence" value="ECO:0000269"/>
    <property type="project" value="DisProt"/>
</dbReference>
<dbReference type="GO" id="GO:0036506">
    <property type="term" value="P:maintenance of unfolded protein"/>
    <property type="evidence" value="ECO:0000314"/>
    <property type="project" value="DisProt"/>
</dbReference>
<dbReference type="GO" id="GO:0032781">
    <property type="term" value="P:positive regulation of ATP-dependent activity"/>
    <property type="evidence" value="ECO:0000314"/>
    <property type="project" value="UniProtKB"/>
</dbReference>
<dbReference type="GO" id="GO:0006457">
    <property type="term" value="P:protein folding"/>
    <property type="evidence" value="ECO:0000318"/>
    <property type="project" value="GO_Central"/>
</dbReference>
<dbReference type="CDD" id="cd08892">
    <property type="entry name" value="SRPBCC_Aha1"/>
    <property type="match status" value="1"/>
</dbReference>
<dbReference type="FunFam" id="3.15.10.20:FF:000001">
    <property type="entry name" value="Activator of 90 kDa heat shock protein ATPase 1"/>
    <property type="match status" value="1"/>
</dbReference>
<dbReference type="FunFam" id="3.30.530.20:FF:000018">
    <property type="entry name" value="Activator of 90 kDa heat shock protein ATPase 1"/>
    <property type="match status" value="1"/>
</dbReference>
<dbReference type="Gene3D" id="3.30.530.20">
    <property type="match status" value="1"/>
</dbReference>
<dbReference type="Gene3D" id="3.15.10.20">
    <property type="entry name" value="Activator of Hsp90 ATPase Aha1, N-terminal domain"/>
    <property type="match status" value="1"/>
</dbReference>
<dbReference type="InterPro" id="IPR036338">
    <property type="entry name" value="Aha1"/>
</dbReference>
<dbReference type="InterPro" id="IPR015310">
    <property type="entry name" value="AHSA1-like_N"/>
</dbReference>
<dbReference type="InterPro" id="IPR013538">
    <property type="entry name" value="ASHA1/2-like_C"/>
</dbReference>
<dbReference type="InterPro" id="IPR023393">
    <property type="entry name" value="START-like_dom_sf"/>
</dbReference>
<dbReference type="PANTHER" id="PTHR13009:SF7">
    <property type="entry name" value="ACTIVATOR OF 90 KDA HEAT SHOCK PROTEIN ATPASE HOMOLOG 1"/>
    <property type="match status" value="1"/>
</dbReference>
<dbReference type="PANTHER" id="PTHR13009">
    <property type="entry name" value="HEAT SHOCK PROTEIN 90 HSP90 CO-CHAPERONE AHA-1"/>
    <property type="match status" value="1"/>
</dbReference>
<dbReference type="Pfam" id="PF09229">
    <property type="entry name" value="Aha1_N"/>
    <property type="match status" value="1"/>
</dbReference>
<dbReference type="Pfam" id="PF08327">
    <property type="entry name" value="AHSA1"/>
    <property type="match status" value="1"/>
</dbReference>
<dbReference type="SMART" id="SM01000">
    <property type="entry name" value="Aha1_N"/>
    <property type="match status" value="1"/>
</dbReference>
<dbReference type="SUPFAM" id="SSF103111">
    <property type="entry name" value="Activator of Hsp90 ATPase, Aha1"/>
    <property type="match status" value="1"/>
</dbReference>
<dbReference type="SUPFAM" id="SSF55961">
    <property type="entry name" value="Bet v1-like"/>
    <property type="match status" value="1"/>
</dbReference>
<keyword id="KW-0002">3D-structure</keyword>
<keyword id="KW-0007">Acetylation</keyword>
<keyword id="KW-0025">Alternative splicing</keyword>
<keyword id="KW-0143">Chaperone</keyword>
<keyword id="KW-0963">Cytoplasm</keyword>
<keyword id="KW-0256">Endoplasmic reticulum</keyword>
<keyword id="KW-0945">Host-virus interaction</keyword>
<keyword id="KW-1017">Isopeptide bond</keyword>
<keyword id="KW-0597">Phosphoprotein</keyword>
<keyword id="KW-1267">Proteomics identification</keyword>
<keyword id="KW-1185">Reference proteome</keyword>
<keyword id="KW-0346">Stress response</keyword>
<keyword id="KW-0832">Ubl conjugation</keyword>
<gene>
    <name type="primary">AHSA1</name>
    <name type="synonym">C14orf3</name>
    <name type="ORF">HSPC322</name>
</gene>
<feature type="chain" id="PRO_0000215820" description="Activator of 90 kDa heat shock protein ATPase homolog 1">
    <location>
        <begin position="1"/>
        <end position="338"/>
    </location>
</feature>
<feature type="modified residue" description="N6-acetyllysine" evidence="12">
    <location>
        <position position="3"/>
    </location>
</feature>
<feature type="modified residue" description="Phosphoserine" evidence="13 14">
    <location>
        <position position="193"/>
    </location>
</feature>
<feature type="modified residue" description="N6-acetyllysine" evidence="12">
    <location>
        <position position="212"/>
    </location>
</feature>
<feature type="modified residue" description="Phosphotyrosine; by ABL" evidence="11">
    <location>
        <position position="223"/>
    </location>
</feature>
<feature type="modified residue" description="Phosphoserine" evidence="15">
    <location>
        <position position="258"/>
    </location>
</feature>
<feature type="cross-link" description="Glycyl lysine isopeptide (Lys-Gly) (interchain with G-Cter in SUMO1)" evidence="16">
    <location>
        <position position="182"/>
    </location>
</feature>
<feature type="cross-link" description="Glycyl lysine isopeptide (Lys-Gly) (interchain with G-Cter in SUMO2)" evidence="17">
    <location>
        <position position="203"/>
    </location>
</feature>
<feature type="splice variant" id="VSP_055797" description="In isoform 2." evidence="9">
    <original>HFATITLTFIDKNGETELCMEGRGIPAPEEERTRQGWQRYYFEGIKQTFGYGARLF</original>
    <variation>SHCHSG</variation>
    <location>
        <begin position="283"/>
        <end position="338"/>
    </location>
</feature>
<feature type="mutagenesis site" description="Phosphomimetic mutant. Increases the binding to HSP90AA1 resulting in TSC1 dissociation from HSP90AA1." evidence="8">
    <original>Y</original>
    <variation>E</variation>
    <location>
        <position position="223"/>
    </location>
</feature>
<feature type="sequence conflict" description="In Ref. 7; AAF29000." evidence="10" ref="7">
    <original>EA</original>
    <variation>CL</variation>
    <location>
        <begin position="67"/>
        <end position="68"/>
    </location>
</feature>
<feature type="helix" evidence="19">
    <location>
        <begin position="33"/>
        <end position="44"/>
    </location>
</feature>
<feature type="helix" evidence="20">
    <location>
        <begin position="52"/>
        <end position="54"/>
    </location>
</feature>
<feature type="strand" evidence="19">
    <location>
        <begin position="57"/>
        <end position="61"/>
    </location>
</feature>
<feature type="strand" evidence="19">
    <location>
        <begin position="65"/>
        <end position="71"/>
    </location>
</feature>
<feature type="strand" evidence="20">
    <location>
        <begin position="73"/>
        <end position="75"/>
    </location>
</feature>
<feature type="strand" evidence="19">
    <location>
        <begin position="78"/>
        <end position="93"/>
    </location>
</feature>
<feature type="turn" evidence="19">
    <location>
        <begin position="94"/>
        <end position="96"/>
    </location>
</feature>
<feature type="strand" evidence="19">
    <location>
        <begin position="97"/>
        <end position="99"/>
    </location>
</feature>
<feature type="strand" evidence="19">
    <location>
        <begin position="102"/>
        <end position="105"/>
    </location>
</feature>
<feature type="strand" evidence="19">
    <location>
        <begin position="120"/>
        <end position="122"/>
    </location>
</feature>
<feature type="strand" evidence="19">
    <location>
        <begin position="124"/>
        <end position="127"/>
    </location>
</feature>
<feature type="turn" evidence="19">
    <location>
        <begin position="128"/>
        <end position="130"/>
    </location>
</feature>
<feature type="helix" evidence="19">
    <location>
        <begin position="131"/>
        <end position="159"/>
    </location>
</feature>
<feature type="strand" evidence="18">
    <location>
        <begin position="206"/>
        <end position="217"/>
    </location>
</feature>
<feature type="helix" evidence="18">
    <location>
        <begin position="219"/>
        <end position="225"/>
    </location>
</feature>
<feature type="helix" evidence="18">
    <location>
        <begin position="229"/>
        <end position="235"/>
    </location>
</feature>
<feature type="strand" evidence="20">
    <location>
        <begin position="249"/>
        <end position="252"/>
    </location>
</feature>
<feature type="turn" evidence="18">
    <location>
        <begin position="253"/>
        <end position="256"/>
    </location>
</feature>
<feature type="strand" evidence="18">
    <location>
        <begin position="261"/>
        <end position="265"/>
    </location>
</feature>
<feature type="turn" evidence="18">
    <location>
        <begin position="266"/>
        <end position="268"/>
    </location>
</feature>
<feature type="strand" evidence="18">
    <location>
        <begin position="269"/>
        <end position="276"/>
    </location>
</feature>
<feature type="strand" evidence="18">
    <location>
        <begin position="285"/>
        <end position="290"/>
    </location>
</feature>
<feature type="strand" evidence="18">
    <location>
        <begin position="298"/>
        <end position="308"/>
    </location>
</feature>
<feature type="helix" evidence="18">
    <location>
        <begin position="309"/>
        <end position="317"/>
    </location>
</feature>
<feature type="turn" evidence="18">
    <location>
        <begin position="318"/>
        <end position="323"/>
    </location>
</feature>
<feature type="helix" evidence="18">
    <location>
        <begin position="324"/>
        <end position="330"/>
    </location>
</feature>
<reference key="1">
    <citation type="submission" date="1999-06" db="EMBL/GenBank/DDBJ databases">
        <title>Isolation of a novel gene underexpressed in Down syndrome.</title>
        <authorList>
            <person name="Michaud J."/>
            <person name="Chrast R."/>
            <person name="Rossier C."/>
            <person name="Papassavas M.P."/>
            <person name="Antonarakis S.E."/>
            <person name="Scott H.S."/>
        </authorList>
    </citation>
    <scope>NUCLEOTIDE SEQUENCE [MRNA] (ISOFORM 1)</scope>
</reference>
<reference key="2">
    <citation type="journal article" date="2000" name="Proc. Natl. Acad. Sci. U.S.A.">
        <title>Gene expression profiling in the human hypothalamus-pituitary-adrenal axis and full-length cDNA cloning.</title>
        <authorList>
            <person name="Hu R.-M."/>
            <person name="Han Z.-G."/>
            <person name="Song H.-D."/>
            <person name="Peng Y.-D."/>
            <person name="Huang Q.-H."/>
            <person name="Ren S.-X."/>
            <person name="Gu Y.-J."/>
            <person name="Huang C.-H."/>
            <person name="Li Y.-B."/>
            <person name="Jiang C.-L."/>
            <person name="Fu G."/>
            <person name="Zhang Q.-H."/>
            <person name="Gu B.-W."/>
            <person name="Dai M."/>
            <person name="Mao Y.-F."/>
            <person name="Gao G.-F."/>
            <person name="Rong R."/>
            <person name="Ye M."/>
            <person name="Zhou J."/>
            <person name="Xu S.-H."/>
            <person name="Gu J."/>
            <person name="Shi J.-X."/>
            <person name="Jin W.-R."/>
            <person name="Zhang C.-K."/>
            <person name="Wu T.-M."/>
            <person name="Huang G.-Y."/>
            <person name="Chen Z."/>
            <person name="Chen M.-D."/>
            <person name="Chen J.-L."/>
        </authorList>
    </citation>
    <scope>NUCLEOTIDE SEQUENCE [LARGE SCALE MRNA] (ISOFORM 1)</scope>
    <source>
        <tissue>Adrenal gland</tissue>
    </source>
</reference>
<reference key="3">
    <citation type="journal article" date="2004" name="Nat. Genet.">
        <title>Complete sequencing and characterization of 21,243 full-length human cDNAs.</title>
        <authorList>
            <person name="Ota T."/>
            <person name="Suzuki Y."/>
            <person name="Nishikawa T."/>
            <person name="Otsuki T."/>
            <person name="Sugiyama T."/>
            <person name="Irie R."/>
            <person name="Wakamatsu A."/>
            <person name="Hayashi K."/>
            <person name="Sato H."/>
            <person name="Nagai K."/>
            <person name="Kimura K."/>
            <person name="Makita H."/>
            <person name="Sekine M."/>
            <person name="Obayashi M."/>
            <person name="Nishi T."/>
            <person name="Shibahara T."/>
            <person name="Tanaka T."/>
            <person name="Ishii S."/>
            <person name="Yamamoto J."/>
            <person name="Saito K."/>
            <person name="Kawai Y."/>
            <person name="Isono Y."/>
            <person name="Nakamura Y."/>
            <person name="Nagahari K."/>
            <person name="Murakami K."/>
            <person name="Yasuda T."/>
            <person name="Iwayanagi T."/>
            <person name="Wagatsuma M."/>
            <person name="Shiratori A."/>
            <person name="Sudo H."/>
            <person name="Hosoiri T."/>
            <person name="Kaku Y."/>
            <person name="Kodaira H."/>
            <person name="Kondo H."/>
            <person name="Sugawara M."/>
            <person name="Takahashi M."/>
            <person name="Kanda K."/>
            <person name="Yokoi T."/>
            <person name="Furuya T."/>
            <person name="Kikkawa E."/>
            <person name="Omura Y."/>
            <person name="Abe K."/>
            <person name="Kamihara K."/>
            <person name="Katsuta N."/>
            <person name="Sato K."/>
            <person name="Tanikawa M."/>
            <person name="Yamazaki M."/>
            <person name="Ninomiya K."/>
            <person name="Ishibashi T."/>
            <person name="Yamashita H."/>
            <person name="Murakawa K."/>
            <person name="Fujimori K."/>
            <person name="Tanai H."/>
            <person name="Kimata M."/>
            <person name="Watanabe M."/>
            <person name="Hiraoka S."/>
            <person name="Chiba Y."/>
            <person name="Ishida S."/>
            <person name="Ono Y."/>
            <person name="Takiguchi S."/>
            <person name="Watanabe S."/>
            <person name="Yosida M."/>
            <person name="Hotuta T."/>
            <person name="Kusano J."/>
            <person name="Kanehori K."/>
            <person name="Takahashi-Fujii A."/>
            <person name="Hara H."/>
            <person name="Tanase T.-O."/>
            <person name="Nomura Y."/>
            <person name="Togiya S."/>
            <person name="Komai F."/>
            <person name="Hara R."/>
            <person name="Takeuchi K."/>
            <person name="Arita M."/>
            <person name="Imose N."/>
            <person name="Musashino K."/>
            <person name="Yuuki H."/>
            <person name="Oshima A."/>
            <person name="Sasaki N."/>
            <person name="Aotsuka S."/>
            <person name="Yoshikawa Y."/>
            <person name="Matsunawa H."/>
            <person name="Ichihara T."/>
            <person name="Shiohata N."/>
            <person name="Sano S."/>
            <person name="Moriya S."/>
            <person name="Momiyama H."/>
            <person name="Satoh N."/>
            <person name="Takami S."/>
            <person name="Terashima Y."/>
            <person name="Suzuki O."/>
            <person name="Nakagawa S."/>
            <person name="Senoh A."/>
            <person name="Mizoguchi H."/>
            <person name="Goto Y."/>
            <person name="Shimizu F."/>
            <person name="Wakebe H."/>
            <person name="Hishigaki H."/>
            <person name="Watanabe T."/>
            <person name="Sugiyama A."/>
            <person name="Takemoto M."/>
            <person name="Kawakami B."/>
            <person name="Yamazaki M."/>
            <person name="Watanabe K."/>
            <person name="Kumagai A."/>
            <person name="Itakura S."/>
            <person name="Fukuzumi Y."/>
            <person name="Fujimori Y."/>
            <person name="Komiyama M."/>
            <person name="Tashiro H."/>
            <person name="Tanigami A."/>
            <person name="Fujiwara T."/>
            <person name="Ono T."/>
            <person name="Yamada K."/>
            <person name="Fujii Y."/>
            <person name="Ozaki K."/>
            <person name="Hirao M."/>
            <person name="Ohmori Y."/>
            <person name="Kawabata A."/>
            <person name="Hikiji T."/>
            <person name="Kobatake N."/>
            <person name="Inagaki H."/>
            <person name="Ikema Y."/>
            <person name="Okamoto S."/>
            <person name="Okitani R."/>
            <person name="Kawakami T."/>
            <person name="Noguchi S."/>
            <person name="Itoh T."/>
            <person name="Shigeta K."/>
            <person name="Senba T."/>
            <person name="Matsumura K."/>
            <person name="Nakajima Y."/>
            <person name="Mizuno T."/>
            <person name="Morinaga M."/>
            <person name="Sasaki M."/>
            <person name="Togashi T."/>
            <person name="Oyama M."/>
            <person name="Hata H."/>
            <person name="Watanabe M."/>
            <person name="Komatsu T."/>
            <person name="Mizushima-Sugano J."/>
            <person name="Satoh T."/>
            <person name="Shirai Y."/>
            <person name="Takahashi Y."/>
            <person name="Nakagawa K."/>
            <person name="Okumura K."/>
            <person name="Nagase T."/>
            <person name="Nomura N."/>
            <person name="Kikuchi H."/>
            <person name="Masuho Y."/>
            <person name="Yamashita R."/>
            <person name="Nakai K."/>
            <person name="Yada T."/>
            <person name="Nakamura Y."/>
            <person name="Ohara O."/>
            <person name="Isogai T."/>
            <person name="Sugano S."/>
        </authorList>
    </citation>
    <scope>NUCLEOTIDE SEQUENCE [LARGE SCALE MRNA] (ISOFORMS 1 AND 2)</scope>
    <source>
        <tissue>Brain</tissue>
    </source>
</reference>
<reference key="4">
    <citation type="journal article" date="2003" name="Nature">
        <title>The DNA sequence and analysis of human chromosome 14.</title>
        <authorList>
            <person name="Heilig R."/>
            <person name="Eckenberg R."/>
            <person name="Petit J.-L."/>
            <person name="Fonknechten N."/>
            <person name="Da Silva C."/>
            <person name="Cattolico L."/>
            <person name="Levy M."/>
            <person name="Barbe V."/>
            <person name="De Berardinis V."/>
            <person name="Ureta-Vidal A."/>
            <person name="Pelletier E."/>
            <person name="Vico V."/>
            <person name="Anthouard V."/>
            <person name="Rowen L."/>
            <person name="Madan A."/>
            <person name="Qin S."/>
            <person name="Sun H."/>
            <person name="Du H."/>
            <person name="Pepin K."/>
            <person name="Artiguenave F."/>
            <person name="Robert C."/>
            <person name="Cruaud C."/>
            <person name="Bruels T."/>
            <person name="Jaillon O."/>
            <person name="Friedlander L."/>
            <person name="Samson G."/>
            <person name="Brottier P."/>
            <person name="Cure S."/>
            <person name="Segurens B."/>
            <person name="Aniere F."/>
            <person name="Samain S."/>
            <person name="Crespeau H."/>
            <person name="Abbasi N."/>
            <person name="Aiach N."/>
            <person name="Boscus D."/>
            <person name="Dickhoff R."/>
            <person name="Dors M."/>
            <person name="Dubois I."/>
            <person name="Friedman C."/>
            <person name="Gouyvenoux M."/>
            <person name="James R."/>
            <person name="Madan A."/>
            <person name="Mairey-Estrada B."/>
            <person name="Mangenot S."/>
            <person name="Martins N."/>
            <person name="Menard M."/>
            <person name="Oztas S."/>
            <person name="Ratcliffe A."/>
            <person name="Shaffer T."/>
            <person name="Trask B."/>
            <person name="Vacherie B."/>
            <person name="Bellemere C."/>
            <person name="Belser C."/>
            <person name="Besnard-Gonnet M."/>
            <person name="Bartol-Mavel D."/>
            <person name="Boutard M."/>
            <person name="Briez-Silla S."/>
            <person name="Combette S."/>
            <person name="Dufosse-Laurent V."/>
            <person name="Ferron C."/>
            <person name="Lechaplais C."/>
            <person name="Louesse C."/>
            <person name="Muselet D."/>
            <person name="Magdelenat G."/>
            <person name="Pateau E."/>
            <person name="Petit E."/>
            <person name="Sirvain-Trukniewicz P."/>
            <person name="Trybou A."/>
            <person name="Vega-Czarny N."/>
            <person name="Bataille E."/>
            <person name="Bluet E."/>
            <person name="Bordelais I."/>
            <person name="Dubois M."/>
            <person name="Dumont C."/>
            <person name="Guerin T."/>
            <person name="Haffray S."/>
            <person name="Hammadi R."/>
            <person name="Muanga J."/>
            <person name="Pellouin V."/>
            <person name="Robert D."/>
            <person name="Wunderle E."/>
            <person name="Gauguet G."/>
            <person name="Roy A."/>
            <person name="Sainte-Marthe L."/>
            <person name="Verdier J."/>
            <person name="Verdier-Discala C."/>
            <person name="Hillier L.W."/>
            <person name="Fulton L."/>
            <person name="McPherson J."/>
            <person name="Matsuda F."/>
            <person name="Wilson R."/>
            <person name="Scarpelli C."/>
            <person name="Gyapay G."/>
            <person name="Wincker P."/>
            <person name="Saurin W."/>
            <person name="Quetier F."/>
            <person name="Waterston R."/>
            <person name="Hood L."/>
            <person name="Weissenbach J."/>
        </authorList>
    </citation>
    <scope>NUCLEOTIDE SEQUENCE [LARGE SCALE GENOMIC DNA]</scope>
</reference>
<reference key="5">
    <citation type="submission" date="2005-07" db="EMBL/GenBank/DDBJ databases">
        <authorList>
            <person name="Mural R.J."/>
            <person name="Istrail S."/>
            <person name="Sutton G.G."/>
            <person name="Florea L."/>
            <person name="Halpern A.L."/>
            <person name="Mobarry C.M."/>
            <person name="Lippert R."/>
            <person name="Walenz B."/>
            <person name="Shatkay H."/>
            <person name="Dew I."/>
            <person name="Miller J.R."/>
            <person name="Flanigan M.J."/>
            <person name="Edwards N.J."/>
            <person name="Bolanos R."/>
            <person name="Fasulo D."/>
            <person name="Halldorsson B.V."/>
            <person name="Hannenhalli S."/>
            <person name="Turner R."/>
            <person name="Yooseph S."/>
            <person name="Lu F."/>
            <person name="Nusskern D.R."/>
            <person name="Shue B.C."/>
            <person name="Zheng X.H."/>
            <person name="Zhong F."/>
            <person name="Delcher A.L."/>
            <person name="Huson D.H."/>
            <person name="Kravitz S.A."/>
            <person name="Mouchard L."/>
            <person name="Reinert K."/>
            <person name="Remington K.A."/>
            <person name="Clark A.G."/>
            <person name="Waterman M.S."/>
            <person name="Eichler E.E."/>
            <person name="Adams M.D."/>
            <person name="Hunkapiller M.W."/>
            <person name="Myers E.W."/>
            <person name="Venter J.C."/>
        </authorList>
    </citation>
    <scope>NUCLEOTIDE SEQUENCE [LARGE SCALE GENOMIC DNA]</scope>
</reference>
<reference key="6">
    <citation type="journal article" date="2004" name="Genome Res.">
        <title>The status, quality, and expansion of the NIH full-length cDNA project: the Mammalian Gene Collection (MGC).</title>
        <authorList>
            <consortium name="The MGC Project Team"/>
        </authorList>
    </citation>
    <scope>NUCLEOTIDE SEQUENCE [LARGE SCALE MRNA] (ISOFORM 1)</scope>
    <source>
        <tissue>Lung</tissue>
        <tissue>Ovary</tissue>
    </source>
</reference>
<reference key="7">
    <citation type="journal article" date="2000" name="Genome Res.">
        <title>Cloning and functional analysis of cDNAs with open reading frames for 300 previously undefined genes expressed in CD34+ hematopoietic stem/progenitor cells.</title>
        <authorList>
            <person name="Zhang Q.-H."/>
            <person name="Ye M."/>
            <person name="Wu X.-Y."/>
            <person name="Ren S.-X."/>
            <person name="Zhao M."/>
            <person name="Zhao C.-J."/>
            <person name="Fu G."/>
            <person name="Shen Y."/>
            <person name="Fan H.-Y."/>
            <person name="Lu G."/>
            <person name="Zhong M."/>
            <person name="Xu X.-R."/>
            <person name="Han Z.-G."/>
            <person name="Zhang J.-W."/>
            <person name="Tao J."/>
            <person name="Huang Q.-H."/>
            <person name="Zhou J."/>
            <person name="Hu G.-X."/>
            <person name="Gu J."/>
            <person name="Chen S.-J."/>
            <person name="Chen Z."/>
        </authorList>
    </citation>
    <scope>NUCLEOTIDE SEQUENCE [LARGE SCALE MRNA] OF 67-338 (ISOFORM 1)</scope>
    <source>
        <tissue>Umbilical cord blood</tissue>
    </source>
</reference>
<reference key="8">
    <citation type="journal article" date="2001" name="Biochem. Biophys. Res. Commun.">
        <title>p38: a novel protein that associates with the vesicular stomatitis virus glycoprotein.</title>
        <authorList>
            <person name="Sevier C.S."/>
            <person name="Machamer C.E."/>
        </authorList>
    </citation>
    <scope>INTERACTION WITH VSV G</scope>
    <scope>SUBCELLULAR LOCATION</scope>
    <scope>TISSUE SPECIFICITY</scope>
</reference>
<reference key="9">
    <citation type="journal article" date="2002" name="Mol. Cell">
        <title>Activation of the ATPase activity of hsp90 by the stress-regulated cochaperone aha1.</title>
        <authorList>
            <person name="Panaretou B."/>
            <person name="Siligardi G."/>
            <person name="Meyer P."/>
            <person name="Maloney A."/>
            <person name="Sullivan J.K."/>
            <person name="Singh S."/>
            <person name="Millson S.H."/>
            <person name="Clarke P.A."/>
            <person name="Naaby-Hansen S."/>
            <person name="Stein R."/>
            <person name="Cramer R."/>
            <person name="Mollapour M."/>
            <person name="Workman P."/>
            <person name="Piper P.W."/>
            <person name="Pearl L.H."/>
            <person name="Prodromou C."/>
        </authorList>
    </citation>
    <scope>INTERACTION WITH HSPCA</scope>
    <scope>IDENTIFICATION BY MASS SPECTROMETRY</scope>
    <scope>INDUCTION</scope>
</reference>
<reference key="10">
    <citation type="journal article" date="2003" name="J. Biol. Chem.">
        <title>Aha1 binds to the middle domain of Hsp90, contributes to client protein activation, and stimulates the ATPase activity of the molecular chaperone.</title>
        <authorList>
            <person name="Lotz G.P."/>
            <person name="Lin H."/>
            <person name="Harst A."/>
            <person name="Obermann W.M.J."/>
        </authorList>
    </citation>
    <scope>INTERACTION WITH HSPCA</scope>
</reference>
<reference key="11">
    <citation type="journal article" date="2006" name="J. Neurochem.">
        <title>A yeast 2-hybrid analysis of human GTP cyclohydrolase I protein interactions.</title>
        <authorList>
            <person name="Swick L."/>
            <person name="Kapatos G."/>
        </authorList>
    </citation>
    <scope>INTERACTION WITH GCH1</scope>
</reference>
<reference key="12">
    <citation type="journal article" date="2009" name="Genes Dev.">
        <title>Regulation of SR protein phosphorylation and alternative splicing by modulating kinetic interactions of SRPK1 with molecular chaperones.</title>
        <authorList>
            <person name="Zhong X.Y."/>
            <person name="Ding J.H."/>
            <person name="Adams J.A."/>
            <person name="Ghosh G."/>
            <person name="Fu X.D."/>
        </authorList>
    </citation>
    <scope>INTERACTION WITH SRPK1</scope>
</reference>
<reference key="13">
    <citation type="journal article" date="2009" name="Science">
        <title>Lysine acetylation targets protein complexes and co-regulates major cellular functions.</title>
        <authorList>
            <person name="Choudhary C."/>
            <person name="Kumar C."/>
            <person name="Gnad F."/>
            <person name="Nielsen M.L."/>
            <person name="Rehman M."/>
            <person name="Walther T.C."/>
            <person name="Olsen J.V."/>
            <person name="Mann M."/>
        </authorList>
    </citation>
    <scope>ACETYLATION [LARGE SCALE ANALYSIS] AT LYS-3 AND LYS-212</scope>
    <scope>IDENTIFICATION BY MASS SPECTROMETRY [LARGE SCALE ANALYSIS]</scope>
</reference>
<reference key="14">
    <citation type="journal article" date="2010" name="Sci. Signal.">
        <title>Quantitative phosphoproteomics reveals widespread full phosphorylation site occupancy during mitosis.</title>
        <authorList>
            <person name="Olsen J.V."/>
            <person name="Vermeulen M."/>
            <person name="Santamaria A."/>
            <person name="Kumar C."/>
            <person name="Miller M.L."/>
            <person name="Jensen L.J."/>
            <person name="Gnad F."/>
            <person name="Cox J."/>
            <person name="Jensen T.S."/>
            <person name="Nigg E.A."/>
            <person name="Brunak S."/>
            <person name="Mann M."/>
        </authorList>
    </citation>
    <scope>PHOSPHORYLATION [LARGE SCALE ANALYSIS] AT SER-193</scope>
    <scope>IDENTIFICATION BY MASS SPECTROMETRY [LARGE SCALE ANALYSIS]</scope>
    <source>
        <tissue>Cervix carcinoma</tissue>
    </source>
</reference>
<reference key="15">
    <citation type="journal article" date="2011" name="BMC Syst. Biol.">
        <title>Initial characterization of the human central proteome.</title>
        <authorList>
            <person name="Burkard T.R."/>
            <person name="Planyavsky M."/>
            <person name="Kaupe I."/>
            <person name="Breitwieser F.P."/>
            <person name="Buerckstuemmer T."/>
            <person name="Bennett K.L."/>
            <person name="Superti-Furga G."/>
            <person name="Colinge J."/>
        </authorList>
    </citation>
    <scope>IDENTIFICATION BY MASS SPECTROMETRY [LARGE SCALE ANALYSIS]</scope>
</reference>
<reference key="16">
    <citation type="journal article" date="2011" name="Sci. Signal.">
        <title>System-wide temporal characterization of the proteome and phosphoproteome of human embryonic stem cell differentiation.</title>
        <authorList>
            <person name="Rigbolt K.T."/>
            <person name="Prokhorova T.A."/>
            <person name="Akimov V."/>
            <person name="Henningsen J."/>
            <person name="Johansen P.T."/>
            <person name="Kratchmarova I."/>
            <person name="Kassem M."/>
            <person name="Mann M."/>
            <person name="Olsen J.V."/>
            <person name="Blagoev B."/>
        </authorList>
    </citation>
    <scope>PHOSPHORYLATION [LARGE SCALE ANALYSIS] AT SER-193</scope>
    <scope>IDENTIFICATION BY MASS SPECTROMETRY [LARGE SCALE ANALYSIS]</scope>
</reference>
<reference key="17">
    <citation type="journal article" date="2013" name="J. Proteome Res.">
        <title>Toward a comprehensive characterization of a human cancer cell phosphoproteome.</title>
        <authorList>
            <person name="Zhou H."/>
            <person name="Di Palma S."/>
            <person name="Preisinger C."/>
            <person name="Peng M."/>
            <person name="Polat A.N."/>
            <person name="Heck A.J."/>
            <person name="Mohammed S."/>
        </authorList>
    </citation>
    <scope>PHOSPHORYLATION [LARGE SCALE ANALYSIS] AT SER-258</scope>
    <scope>IDENTIFICATION BY MASS SPECTROMETRY [LARGE SCALE ANALYSIS]</scope>
    <source>
        <tissue>Cervix carcinoma</tissue>
        <tissue>Erythroleukemia</tissue>
    </source>
</reference>
<reference key="18">
    <citation type="journal article" date="2014" name="J. Proteomics">
        <title>An enzyme assisted RP-RPLC approach for in-depth analysis of human liver phosphoproteome.</title>
        <authorList>
            <person name="Bian Y."/>
            <person name="Song C."/>
            <person name="Cheng K."/>
            <person name="Dong M."/>
            <person name="Wang F."/>
            <person name="Huang J."/>
            <person name="Sun D."/>
            <person name="Wang L."/>
            <person name="Ye M."/>
            <person name="Zou H."/>
        </authorList>
    </citation>
    <scope>IDENTIFICATION BY MASS SPECTROMETRY [LARGE SCALE ANALYSIS]</scope>
    <source>
        <tissue>Liver</tissue>
    </source>
</reference>
<reference key="19">
    <citation type="journal article" date="2014" name="Proc. Natl. Acad. Sci. U.S.A.">
        <title>Mapping of SUMO sites and analysis of SUMOylation changes induced by external stimuli.</title>
        <authorList>
            <person name="Impens F."/>
            <person name="Radoshevich L."/>
            <person name="Cossart P."/>
            <person name="Ribet D."/>
        </authorList>
    </citation>
    <scope>SUMOYLATION [LARGE SCALE ANALYSIS] AT LYS-182</scope>
    <scope>IDENTIFICATION BY MASS SPECTROMETRY [LARGE SCALE ANALYSIS]</scope>
</reference>
<reference key="20">
    <citation type="journal article" date="2016" name="Nat. Commun.">
        <title>The FNIP co-chaperones decelerate the Hsp90 chaperone cycle and enhance drug binding.</title>
        <authorList>
            <person name="Woodford M.R."/>
            <person name="Dunn D.M."/>
            <person name="Blanden A.R."/>
            <person name="Capriotti D."/>
            <person name="Loiselle D."/>
            <person name="Prodromou C."/>
            <person name="Panaretou B."/>
            <person name="Hughes P.F."/>
            <person name="Smith A."/>
            <person name="Ackerman W."/>
            <person name="Haystead T.A."/>
            <person name="Loh S.N."/>
            <person name="Bourboulia D."/>
            <person name="Schmidt L.S."/>
            <person name="Marston Linehan W."/>
            <person name="Bratslavsky G."/>
            <person name="Mollapour M."/>
        </authorList>
    </citation>
    <scope>FUNCTION</scope>
    <scope>INTERACTION WITH FLCN AND HSP90AA1</scope>
</reference>
<reference key="21">
    <citation type="journal article" date="2017" name="EMBO J.">
        <title>Tumor suppressor Tsc1 is a new Hsp90 co-chaperone that facilitates folding of kinase and non-kinase clients.</title>
        <authorList>
            <person name="Woodford M.R."/>
            <person name="Sager R.A."/>
            <person name="Marris E."/>
            <person name="Dunn D.M."/>
            <person name="Blanden A.R."/>
            <person name="Murphy R.L."/>
            <person name="Rensing N."/>
            <person name="Shapiro O."/>
            <person name="Panaretou B."/>
            <person name="Prodromou C."/>
            <person name="Loh S.N."/>
            <person name="Gutmann D.H."/>
            <person name="Bourboulia D."/>
            <person name="Bratslavsky G."/>
            <person name="Wong M."/>
            <person name="Mollapour M."/>
        </authorList>
    </citation>
    <scope>FUNCTION</scope>
    <scope>INTERACTION WITH HSP90AA1</scope>
    <scope>PHOSPHORYLATION AT TYR-223</scope>
    <scope>MUTAGENESIS OF TYR-223</scope>
</reference>
<reference key="22">
    <citation type="journal article" date="2017" name="Nat. Struct. Mol. Biol.">
        <title>Site-specific mapping of the human SUMO proteome reveals co-modification with phosphorylation.</title>
        <authorList>
            <person name="Hendriks I.A."/>
            <person name="Lyon D."/>
            <person name="Young C."/>
            <person name="Jensen L.J."/>
            <person name="Vertegaal A.C."/>
            <person name="Nielsen M.L."/>
        </authorList>
    </citation>
    <scope>SUMOYLATION [LARGE SCALE ANALYSIS] AT LYS-203</scope>
    <scope>IDENTIFICATION BY MASS SPECTROMETRY [LARGE SCALE ANALYSIS]</scope>
</reference>
<reference key="23">
    <citation type="submission" date="2005-11" db="PDB data bank">
        <title>The solution structure of the C-terminal domain of human activator of 90 kDa heat shock protein ATPase homolog 1.</title>
        <authorList>
            <consortium name="RIKEN structural genomics initiative (RSGI)"/>
        </authorList>
    </citation>
    <scope>STRUCTURE BY NMR OF 204-335</scope>
</reference>
<comment type="function">
    <text evidence="7 8">Acts as a co-chaperone of HSP90AA1 (PubMed:29127155). Activates the ATPase activity of HSP90AA1 leading to increase in its chaperone activity (PubMed:29127155). Competes with the inhibitory co-chaperone FNIP1 for binding to HSP90AA1, thereby providing a reciprocal regulatory mechanism for chaperoning of client proteins (PubMed:27353360). Competes with the inhibitory co-chaperone TSC1 for binding to HSP90AA1, thereby providing a reciprocal regulatory mechanism for chaperoning of client proteins (PubMed:29127155).</text>
</comment>
<comment type="subunit">
    <text evidence="1 3 4 5 6 7 8">Interacts with HSPCA/HSP90 (PubMed:12504007, PubMed:12604615). Interacts (phosphorylated on Tyr-223) with HSP90AA1; the interaction activates HSP90AA1 ATPase activity (PubMed:27353360, PubMed:29127155). Interacts with HSP90AB1 (By similarity). Interacts with GCH1 (PubMed:16696853). Interacts with SRPK1 (PubMed:19240134). Interacts with FLCN (PubMed:27353360).</text>
</comment>
<comment type="subunit">
    <text evidence="2">(Microbial infection) Interacts with vesicular stomatitis virus glycoprotein (VSV G) (via cytoplasmic tail).</text>
</comment>
<comment type="interaction">
    <interactant intactId="EBI-448610">
        <id>O95433</id>
    </interactant>
    <interactant intactId="EBI-958183">
        <id>P30793</id>
        <label>GCH1</label>
    </interactant>
    <organismsDiffer>false</organismsDiffer>
    <experiments>3</experiments>
</comment>
<comment type="interaction">
    <interactant intactId="EBI-448610">
        <id>O95433</id>
    </interactant>
    <interactant intactId="EBI-296047">
        <id>P07900</id>
        <label>HSP90AA1</label>
    </interactant>
    <organismsDiffer>false</organismsDiffer>
    <experiments>6</experiments>
</comment>
<comment type="interaction">
    <interactant intactId="EBI-448610">
        <id>O95433</id>
    </interactant>
    <interactant intactId="EBI-352572">
        <id>P08238</id>
        <label>HSP90AB1</label>
    </interactant>
    <organismsDiffer>false</organismsDiffer>
    <experiments>5</experiments>
</comment>
<comment type="subcellular location">
    <subcellularLocation>
        <location evidence="2">Cytoplasm</location>
        <location evidence="2">Cytosol</location>
    </subcellularLocation>
    <subcellularLocation>
        <location evidence="2">Endoplasmic reticulum</location>
    </subcellularLocation>
    <text>May transiently interact with the endoplasmic reticulum.</text>
</comment>
<comment type="alternative products">
    <event type="alternative splicing"/>
    <isoform>
        <id>O95433-1</id>
        <name>1</name>
        <sequence type="displayed"/>
    </isoform>
    <isoform>
        <id>O95433-2</id>
        <name>2</name>
        <sequence type="described" ref="VSP_055797"/>
    </isoform>
</comment>
<comment type="tissue specificity">
    <text evidence="2">Expressed in numerous tissues, including brain, heart, skeletal muscle and kidney and, at lower levels, liver and placenta.</text>
</comment>
<comment type="induction">
    <text evidence="3">By heat shock and treatment with the HSP90 inhibitor 17-demethoxygeldanamycin (17AAG).</text>
</comment>
<comment type="PTM">
    <text evidence="8">Phosphorylation at Tyr-223 enhances binding to chaperone HSP90AA1.</text>
</comment>
<comment type="similarity">
    <text evidence="10">Belongs to the AHA1 family.</text>
</comment>
<accession>O95433</accession>
<accession>B2R9L2</accession>
<accession>B4DUR9</accession>
<accession>Q96IL6</accession>
<accession>Q9P060</accession>
<organism>
    <name type="scientific">Homo sapiens</name>
    <name type="common">Human</name>
    <dbReference type="NCBI Taxonomy" id="9606"/>
    <lineage>
        <taxon>Eukaryota</taxon>
        <taxon>Metazoa</taxon>
        <taxon>Chordata</taxon>
        <taxon>Craniata</taxon>
        <taxon>Vertebrata</taxon>
        <taxon>Euteleostomi</taxon>
        <taxon>Mammalia</taxon>
        <taxon>Eutheria</taxon>
        <taxon>Euarchontoglires</taxon>
        <taxon>Primates</taxon>
        <taxon>Haplorrhini</taxon>
        <taxon>Catarrhini</taxon>
        <taxon>Hominidae</taxon>
        <taxon>Homo</taxon>
    </lineage>
</organism>
<protein>
    <recommendedName>
        <fullName>Activator of 90 kDa heat shock protein ATPase homolog 1</fullName>
        <shortName>AHA1</shortName>
    </recommendedName>
    <alternativeName>
        <fullName>p38</fullName>
    </alternativeName>
</protein>
<proteinExistence type="evidence at protein level"/>
<name>AHSA1_HUMAN</name>
<sequence length="338" mass="38274">MAKWGEGDPRWIVEERADATNVNNWHWTERDASNWSTDKLKTLFLAVQVQNEEGKCEVTEVSKLDGEASINNRKGKLIFFYEWSVKLNWTGTSKSGVQYKGHVEIPNLSDENSVDEVEISVSLAKDEPDTNLVALMKEEGVKLLREAMGIYISTLKTEFTQGMILPTMNGESVDPVGQPALKTEERKAKPAPSKTQARPVGVKIPTCKITLKETFLTSPEELYRVFTTQELVQAFTHAPATLEADRGGKFHMVDGNVSGEFTDLVPEKHIVMKWRFKSWPEGHFATITLTFIDKNGETELCMEGRGIPAPEEERTRQGWQRYYFEGIKQTFGYGARLF</sequence>
<evidence type="ECO:0000250" key="1">
    <source>
        <dbReference type="UniProtKB" id="Q8BK64"/>
    </source>
</evidence>
<evidence type="ECO:0000269" key="2">
    <source>
    </source>
</evidence>
<evidence type="ECO:0000269" key="3">
    <source>
    </source>
</evidence>
<evidence type="ECO:0000269" key="4">
    <source>
    </source>
</evidence>
<evidence type="ECO:0000269" key="5">
    <source>
    </source>
</evidence>
<evidence type="ECO:0000269" key="6">
    <source>
    </source>
</evidence>
<evidence type="ECO:0000269" key="7">
    <source>
    </source>
</evidence>
<evidence type="ECO:0000269" key="8">
    <source>
    </source>
</evidence>
<evidence type="ECO:0000303" key="9">
    <source>
    </source>
</evidence>
<evidence type="ECO:0000305" key="10"/>
<evidence type="ECO:0000305" key="11">
    <source>
    </source>
</evidence>
<evidence type="ECO:0007744" key="12">
    <source>
    </source>
</evidence>
<evidence type="ECO:0007744" key="13">
    <source>
    </source>
</evidence>
<evidence type="ECO:0007744" key="14">
    <source>
    </source>
</evidence>
<evidence type="ECO:0007744" key="15">
    <source>
    </source>
</evidence>
<evidence type="ECO:0007744" key="16">
    <source>
    </source>
</evidence>
<evidence type="ECO:0007744" key="17">
    <source>
    </source>
</evidence>
<evidence type="ECO:0007829" key="18">
    <source>
        <dbReference type="PDB" id="1X53"/>
    </source>
</evidence>
<evidence type="ECO:0007829" key="19">
    <source>
        <dbReference type="PDB" id="7DMD"/>
    </source>
</evidence>
<evidence type="ECO:0007829" key="20">
    <source>
        <dbReference type="PDB" id="7DME"/>
    </source>
</evidence>